<comment type="function">
    <text evidence="1">Hydrolyzes ribosome-free peptidyl-tRNAs (with 1 or more amino acids incorporated), which drop off the ribosome during protein synthesis, or as a result of ribosome stalling.</text>
</comment>
<comment type="function">
    <text evidence="1">Catalyzes the release of premature peptidyl moieties from peptidyl-tRNA molecules trapped in stalled 50S ribosomal subunits, and thus maintains levels of free tRNAs and 50S ribosomes.</text>
</comment>
<comment type="catalytic activity">
    <reaction evidence="1">
        <text>an N-acyl-L-alpha-aminoacyl-tRNA + H2O = an N-acyl-L-amino acid + a tRNA + H(+)</text>
        <dbReference type="Rhea" id="RHEA:54448"/>
        <dbReference type="Rhea" id="RHEA-COMP:10123"/>
        <dbReference type="Rhea" id="RHEA-COMP:13883"/>
        <dbReference type="ChEBI" id="CHEBI:15377"/>
        <dbReference type="ChEBI" id="CHEBI:15378"/>
        <dbReference type="ChEBI" id="CHEBI:59874"/>
        <dbReference type="ChEBI" id="CHEBI:78442"/>
        <dbReference type="ChEBI" id="CHEBI:138191"/>
        <dbReference type="EC" id="3.1.1.29"/>
    </reaction>
</comment>
<comment type="subunit">
    <text evidence="1">Monomer.</text>
</comment>
<comment type="subcellular location">
    <subcellularLocation>
        <location evidence="1">Cytoplasm</location>
    </subcellularLocation>
</comment>
<comment type="similarity">
    <text evidence="1">Belongs to the PTH family.</text>
</comment>
<dbReference type="EC" id="3.1.1.29" evidence="1"/>
<dbReference type="EMBL" id="CP000932">
    <property type="protein sequence ID" value="ACM64679.1"/>
    <property type="molecule type" value="Genomic_DNA"/>
</dbReference>
<dbReference type="RefSeq" id="WP_012662062.1">
    <property type="nucleotide sequence ID" value="NC_012039.1"/>
</dbReference>
<dbReference type="RefSeq" id="WP_012662063.1">
    <property type="nucleotide sequence ID" value="NC_012039.1"/>
</dbReference>
<dbReference type="SMR" id="B9KDP1"/>
<dbReference type="STRING" id="306263.Cla_1364"/>
<dbReference type="KEGG" id="cla:CLA_1364"/>
<dbReference type="PATRIC" id="fig|306263.5.peg.1350"/>
<dbReference type="eggNOG" id="COG0193">
    <property type="taxonomic scope" value="Bacteria"/>
</dbReference>
<dbReference type="HOGENOM" id="CLU_062456_4_1_7"/>
<dbReference type="Proteomes" id="UP000007727">
    <property type="component" value="Chromosome"/>
</dbReference>
<dbReference type="GO" id="GO:0005737">
    <property type="term" value="C:cytoplasm"/>
    <property type="evidence" value="ECO:0007669"/>
    <property type="project" value="UniProtKB-SubCell"/>
</dbReference>
<dbReference type="GO" id="GO:0004045">
    <property type="term" value="F:peptidyl-tRNA hydrolase activity"/>
    <property type="evidence" value="ECO:0007669"/>
    <property type="project" value="UniProtKB-UniRule"/>
</dbReference>
<dbReference type="GO" id="GO:0000049">
    <property type="term" value="F:tRNA binding"/>
    <property type="evidence" value="ECO:0007669"/>
    <property type="project" value="UniProtKB-UniRule"/>
</dbReference>
<dbReference type="GO" id="GO:0006515">
    <property type="term" value="P:protein quality control for misfolded or incompletely synthesized proteins"/>
    <property type="evidence" value="ECO:0007669"/>
    <property type="project" value="UniProtKB-UniRule"/>
</dbReference>
<dbReference type="GO" id="GO:0072344">
    <property type="term" value="P:rescue of stalled ribosome"/>
    <property type="evidence" value="ECO:0007669"/>
    <property type="project" value="UniProtKB-UniRule"/>
</dbReference>
<dbReference type="CDD" id="cd00462">
    <property type="entry name" value="PTH"/>
    <property type="match status" value="1"/>
</dbReference>
<dbReference type="FunFam" id="3.40.50.1470:FF:000001">
    <property type="entry name" value="Peptidyl-tRNA hydrolase"/>
    <property type="match status" value="1"/>
</dbReference>
<dbReference type="Gene3D" id="3.40.50.1470">
    <property type="entry name" value="Peptidyl-tRNA hydrolase"/>
    <property type="match status" value="1"/>
</dbReference>
<dbReference type="HAMAP" id="MF_00083">
    <property type="entry name" value="Pept_tRNA_hydro_bact"/>
    <property type="match status" value="1"/>
</dbReference>
<dbReference type="InterPro" id="IPR001328">
    <property type="entry name" value="Pept_tRNA_hydro"/>
</dbReference>
<dbReference type="InterPro" id="IPR018171">
    <property type="entry name" value="Pept_tRNA_hydro_CS"/>
</dbReference>
<dbReference type="InterPro" id="IPR036416">
    <property type="entry name" value="Pept_tRNA_hydro_sf"/>
</dbReference>
<dbReference type="NCBIfam" id="TIGR00447">
    <property type="entry name" value="pth"/>
    <property type="match status" value="1"/>
</dbReference>
<dbReference type="PANTHER" id="PTHR17224">
    <property type="entry name" value="PEPTIDYL-TRNA HYDROLASE"/>
    <property type="match status" value="1"/>
</dbReference>
<dbReference type="PANTHER" id="PTHR17224:SF1">
    <property type="entry name" value="PEPTIDYL-TRNA HYDROLASE"/>
    <property type="match status" value="1"/>
</dbReference>
<dbReference type="Pfam" id="PF01195">
    <property type="entry name" value="Pept_tRNA_hydro"/>
    <property type="match status" value="1"/>
</dbReference>
<dbReference type="SUPFAM" id="SSF53178">
    <property type="entry name" value="Peptidyl-tRNA hydrolase-like"/>
    <property type="match status" value="1"/>
</dbReference>
<dbReference type="PROSITE" id="PS01195">
    <property type="entry name" value="PEPT_TRNA_HYDROL_1"/>
    <property type="match status" value="1"/>
</dbReference>
<dbReference type="PROSITE" id="PS01196">
    <property type="entry name" value="PEPT_TRNA_HYDROL_2"/>
    <property type="match status" value="1"/>
</dbReference>
<reference key="1">
    <citation type="journal article" date="2008" name="Foodborne Pathog. Dis.">
        <title>The complete genome sequence and analysis of the human pathogen Campylobacter lari.</title>
        <authorList>
            <person name="Miller W.G."/>
            <person name="Wang G."/>
            <person name="Binnewies T.T."/>
            <person name="Parker C.T."/>
        </authorList>
    </citation>
    <scope>NUCLEOTIDE SEQUENCE [LARGE SCALE GENOMIC DNA]</scope>
    <source>
        <strain>RM2100 / D67 / ATCC BAA-1060</strain>
    </source>
</reference>
<gene>
    <name evidence="1" type="primary">pth</name>
    <name type="ordered locus">Cla_1364</name>
</gene>
<feature type="chain" id="PRO_1000118380" description="Peptidyl-tRNA hydrolase">
    <location>
        <begin position="1"/>
        <end position="179"/>
    </location>
</feature>
<feature type="active site" description="Proton acceptor" evidence="1">
    <location>
        <position position="19"/>
    </location>
</feature>
<feature type="binding site" evidence="1">
    <location>
        <position position="14"/>
    </location>
    <ligand>
        <name>tRNA</name>
        <dbReference type="ChEBI" id="CHEBI:17843"/>
    </ligand>
</feature>
<feature type="binding site" evidence="1">
    <location>
        <position position="61"/>
    </location>
    <ligand>
        <name>tRNA</name>
        <dbReference type="ChEBI" id="CHEBI:17843"/>
    </ligand>
</feature>
<feature type="binding site" evidence="1">
    <location>
        <position position="63"/>
    </location>
    <ligand>
        <name>tRNA</name>
        <dbReference type="ChEBI" id="CHEBI:17843"/>
    </ligand>
</feature>
<feature type="binding site" evidence="1">
    <location>
        <position position="107"/>
    </location>
    <ligand>
        <name>tRNA</name>
        <dbReference type="ChEBI" id="CHEBI:17843"/>
    </ligand>
</feature>
<feature type="site" description="Discriminates between blocked and unblocked aminoacyl-tRNA" evidence="1">
    <location>
        <position position="9"/>
    </location>
</feature>
<feature type="site" description="Stabilizes the basic form of H active site to accept a proton" evidence="1">
    <location>
        <position position="86"/>
    </location>
</feature>
<keyword id="KW-0963">Cytoplasm</keyword>
<keyword id="KW-0378">Hydrolase</keyword>
<keyword id="KW-1185">Reference proteome</keyword>
<keyword id="KW-0694">RNA-binding</keyword>
<keyword id="KW-0820">tRNA-binding</keyword>
<sequence length="179" mass="19886">MTLVVGLGNIGEQYAQTRHNVGFMLIDLLLKDLEVAKLSNTKFKGELFKSSLAFFLKPSTYMNLSGESVKAVSDFYKCDRIIVIHDDIDLNLGTLKFKIGGSSGGHNGLKSIDNLCGNAYERVRIGVGKDQDVISHVLGKFKQEEQESLNKVLEQAKKALFELLKSNIEQVASKYSIRN</sequence>
<organism>
    <name type="scientific">Campylobacter lari (strain RM2100 / D67 / ATCC BAA-1060)</name>
    <dbReference type="NCBI Taxonomy" id="306263"/>
    <lineage>
        <taxon>Bacteria</taxon>
        <taxon>Pseudomonadati</taxon>
        <taxon>Campylobacterota</taxon>
        <taxon>Epsilonproteobacteria</taxon>
        <taxon>Campylobacterales</taxon>
        <taxon>Campylobacteraceae</taxon>
        <taxon>Campylobacter</taxon>
    </lineage>
</organism>
<evidence type="ECO:0000255" key="1">
    <source>
        <dbReference type="HAMAP-Rule" id="MF_00083"/>
    </source>
</evidence>
<protein>
    <recommendedName>
        <fullName evidence="1">Peptidyl-tRNA hydrolase</fullName>
        <shortName evidence="1">Pth</shortName>
        <ecNumber evidence="1">3.1.1.29</ecNumber>
    </recommendedName>
</protein>
<accession>B9KDP1</accession>
<proteinExistence type="inferred from homology"/>
<name>PTH_CAMLR</name>